<accession>Q9RYD4</accession>
<name>NPD_DEIRA</name>
<dbReference type="EC" id="2.3.1.286" evidence="1"/>
<dbReference type="EMBL" id="AE000513">
    <property type="protein sequence ID" value="AAF09608.1"/>
    <property type="molecule type" value="Genomic_DNA"/>
</dbReference>
<dbReference type="PIR" id="G75570">
    <property type="entry name" value="G75570"/>
</dbReference>
<dbReference type="RefSeq" id="NP_293742.1">
    <property type="nucleotide sequence ID" value="NC_001263.1"/>
</dbReference>
<dbReference type="RefSeq" id="WP_010886664.1">
    <property type="nucleotide sequence ID" value="NC_001263.1"/>
</dbReference>
<dbReference type="SMR" id="Q9RYD4"/>
<dbReference type="FunCoup" id="Q9RYD4">
    <property type="interactions" value="350"/>
</dbReference>
<dbReference type="STRING" id="243230.DR_0016"/>
<dbReference type="PaxDb" id="243230-DR_0016"/>
<dbReference type="EnsemblBacteria" id="AAF09608">
    <property type="protein sequence ID" value="AAF09608"/>
    <property type="gene ID" value="DR_0016"/>
</dbReference>
<dbReference type="GeneID" id="69516243"/>
<dbReference type="KEGG" id="dra:DR_0016"/>
<dbReference type="PATRIC" id="fig|243230.17.peg.182"/>
<dbReference type="eggNOG" id="COG0846">
    <property type="taxonomic scope" value="Bacteria"/>
</dbReference>
<dbReference type="HOGENOM" id="CLU_023643_3_1_0"/>
<dbReference type="InParanoid" id="Q9RYD4"/>
<dbReference type="OrthoDB" id="9800582at2"/>
<dbReference type="Proteomes" id="UP000002524">
    <property type="component" value="Chromosome 1"/>
</dbReference>
<dbReference type="GO" id="GO:0005737">
    <property type="term" value="C:cytoplasm"/>
    <property type="evidence" value="ECO:0007669"/>
    <property type="project" value="UniProtKB-SubCell"/>
</dbReference>
<dbReference type="GO" id="GO:0017136">
    <property type="term" value="F:histone deacetylase activity, NAD-dependent"/>
    <property type="evidence" value="ECO:0000318"/>
    <property type="project" value="GO_Central"/>
</dbReference>
<dbReference type="GO" id="GO:0070403">
    <property type="term" value="F:NAD+ binding"/>
    <property type="evidence" value="ECO:0000318"/>
    <property type="project" value="GO_Central"/>
</dbReference>
<dbReference type="GO" id="GO:0036054">
    <property type="term" value="F:protein-malonyllysine demalonylase activity"/>
    <property type="evidence" value="ECO:0007669"/>
    <property type="project" value="InterPro"/>
</dbReference>
<dbReference type="GO" id="GO:0036055">
    <property type="term" value="F:protein-succinyllysine desuccinylase activity"/>
    <property type="evidence" value="ECO:0007669"/>
    <property type="project" value="UniProtKB-UniRule"/>
</dbReference>
<dbReference type="CDD" id="cd01412">
    <property type="entry name" value="SIRT5_Af1_CobB"/>
    <property type="match status" value="1"/>
</dbReference>
<dbReference type="Gene3D" id="3.30.1600.10">
    <property type="entry name" value="SIR2/SIRT2 'Small Domain"/>
    <property type="match status" value="1"/>
</dbReference>
<dbReference type="Gene3D" id="3.40.50.1220">
    <property type="entry name" value="TPP-binding domain"/>
    <property type="match status" value="1"/>
</dbReference>
<dbReference type="HAMAP" id="MF_01121">
    <property type="entry name" value="Sirtuin_ClassIII"/>
    <property type="match status" value="1"/>
</dbReference>
<dbReference type="InterPro" id="IPR029035">
    <property type="entry name" value="DHS-like_NAD/FAD-binding_dom"/>
</dbReference>
<dbReference type="InterPro" id="IPR050134">
    <property type="entry name" value="NAD-dep_sirtuin_deacylases"/>
</dbReference>
<dbReference type="InterPro" id="IPR003000">
    <property type="entry name" value="Sirtuin"/>
</dbReference>
<dbReference type="InterPro" id="IPR026591">
    <property type="entry name" value="Sirtuin_cat_small_dom_sf"/>
</dbReference>
<dbReference type="InterPro" id="IPR027546">
    <property type="entry name" value="Sirtuin_class_III"/>
</dbReference>
<dbReference type="InterPro" id="IPR026590">
    <property type="entry name" value="Ssirtuin_cat_dom"/>
</dbReference>
<dbReference type="PANTHER" id="PTHR11085:SF4">
    <property type="entry name" value="NAD-DEPENDENT PROTEIN DEACYLASE"/>
    <property type="match status" value="1"/>
</dbReference>
<dbReference type="PANTHER" id="PTHR11085">
    <property type="entry name" value="NAD-DEPENDENT PROTEIN DEACYLASE SIRTUIN-5, MITOCHONDRIAL-RELATED"/>
    <property type="match status" value="1"/>
</dbReference>
<dbReference type="Pfam" id="PF02146">
    <property type="entry name" value="SIR2"/>
    <property type="match status" value="1"/>
</dbReference>
<dbReference type="SUPFAM" id="SSF52467">
    <property type="entry name" value="DHS-like NAD/FAD-binding domain"/>
    <property type="match status" value="1"/>
</dbReference>
<dbReference type="PROSITE" id="PS50305">
    <property type="entry name" value="SIRTUIN"/>
    <property type="match status" value="1"/>
</dbReference>
<sequence>MDLSQARAALKAARRVAVLTGAGISAESGIPTFRDAQTGHWARFRPEDLASPDAYRRDPDLVWEWYAGRYRDVLAAQPNRGHELLAELERRKGPGFFLATQNVDGLHARAGSGSAGGELVELHGNLLQARDELTGEVFPLAAPDELTLPPLSPNGQRMRPHIVWFGEYLPVDALDAAQRAFAGAEVALVIGTSSVVYPAAGLAAETLRRGGAVIEINPEATDLTPDATFSLRESASRGLELLLEDD</sequence>
<comment type="function">
    <text evidence="1">NAD-dependent lysine deacetylase and desuccinylase that specifically removes acetyl and succinyl groups on target proteins. Modulates the activities of several proteins which are inactive in their acylated form.</text>
</comment>
<comment type="catalytic activity">
    <reaction evidence="1">
        <text>N(6)-acetyl-L-lysyl-[protein] + NAD(+) + H2O = 2''-O-acetyl-ADP-D-ribose + nicotinamide + L-lysyl-[protein]</text>
        <dbReference type="Rhea" id="RHEA:43636"/>
        <dbReference type="Rhea" id="RHEA-COMP:9752"/>
        <dbReference type="Rhea" id="RHEA-COMP:10731"/>
        <dbReference type="ChEBI" id="CHEBI:15377"/>
        <dbReference type="ChEBI" id="CHEBI:17154"/>
        <dbReference type="ChEBI" id="CHEBI:29969"/>
        <dbReference type="ChEBI" id="CHEBI:57540"/>
        <dbReference type="ChEBI" id="CHEBI:61930"/>
        <dbReference type="ChEBI" id="CHEBI:83767"/>
        <dbReference type="EC" id="2.3.1.286"/>
    </reaction>
</comment>
<comment type="catalytic activity">
    <reaction evidence="1">
        <text>N(6)-succinyl-L-lysyl-[protein] + NAD(+) + H2O = 2''-O-succinyl-ADP-D-ribose + nicotinamide + L-lysyl-[protein]</text>
        <dbReference type="Rhea" id="RHEA:47668"/>
        <dbReference type="Rhea" id="RHEA-COMP:9752"/>
        <dbReference type="Rhea" id="RHEA-COMP:11877"/>
        <dbReference type="ChEBI" id="CHEBI:15377"/>
        <dbReference type="ChEBI" id="CHEBI:17154"/>
        <dbReference type="ChEBI" id="CHEBI:29969"/>
        <dbReference type="ChEBI" id="CHEBI:57540"/>
        <dbReference type="ChEBI" id="CHEBI:87830"/>
        <dbReference type="ChEBI" id="CHEBI:87832"/>
    </reaction>
</comment>
<comment type="subcellular location">
    <subcellularLocation>
        <location evidence="1">Cytoplasm</location>
    </subcellularLocation>
</comment>
<comment type="domain">
    <text evidence="1">2 residues (Tyr-66 and Arg-69) present in a large hydrophobic pocket are probably involved in substrate specificity. They are important for desuccinylation activity, but dispensable for deacetylation activity.</text>
</comment>
<comment type="similarity">
    <text evidence="1">Belongs to the sirtuin family. Class III subfamily.</text>
</comment>
<reference key="1">
    <citation type="journal article" date="1999" name="Science">
        <title>Genome sequence of the radioresistant bacterium Deinococcus radiodurans R1.</title>
        <authorList>
            <person name="White O."/>
            <person name="Eisen J.A."/>
            <person name="Heidelberg J.F."/>
            <person name="Hickey E.K."/>
            <person name="Peterson J.D."/>
            <person name="Dodson R.J."/>
            <person name="Haft D.H."/>
            <person name="Gwinn M.L."/>
            <person name="Nelson W.C."/>
            <person name="Richardson D.L."/>
            <person name="Moffat K.S."/>
            <person name="Qin H."/>
            <person name="Jiang L."/>
            <person name="Pamphile W."/>
            <person name="Crosby M."/>
            <person name="Shen M."/>
            <person name="Vamathevan J.J."/>
            <person name="Lam P."/>
            <person name="McDonald L.A."/>
            <person name="Utterback T.R."/>
            <person name="Zalewski C."/>
            <person name="Makarova K.S."/>
            <person name="Aravind L."/>
            <person name="Daly M.J."/>
            <person name="Minton K.W."/>
            <person name="Fleischmann R.D."/>
            <person name="Ketchum K.A."/>
            <person name="Nelson K.E."/>
            <person name="Salzberg S.L."/>
            <person name="Smith H.O."/>
            <person name="Venter J.C."/>
            <person name="Fraser C.M."/>
        </authorList>
    </citation>
    <scope>NUCLEOTIDE SEQUENCE [LARGE SCALE GENOMIC DNA]</scope>
    <source>
        <strain>ATCC 13939 / DSM 20539 / JCM 16871 / CCUG 27074 / LMG 4051 / NBRC 15346 / NCIMB 9279 / VKM B-1422 / R1</strain>
    </source>
</reference>
<feature type="chain" id="PRO_0000110311" description="NAD-dependent protein deacylase">
    <location>
        <begin position="1"/>
        <end position="246"/>
    </location>
</feature>
<feature type="domain" description="Deacetylase sirtuin-type" evidence="2">
    <location>
        <begin position="1"/>
        <end position="246"/>
    </location>
</feature>
<feature type="active site" description="Proton acceptor" evidence="1">
    <location>
        <position position="123"/>
    </location>
</feature>
<feature type="binding site" evidence="1">
    <location>
        <begin position="21"/>
        <end position="41"/>
    </location>
    <ligand>
        <name>NAD(+)</name>
        <dbReference type="ChEBI" id="CHEBI:57540"/>
    </ligand>
</feature>
<feature type="binding site" evidence="1">
    <location>
        <position position="66"/>
    </location>
    <ligand>
        <name>substrate</name>
    </ligand>
</feature>
<feature type="binding site" evidence="1">
    <location>
        <position position="69"/>
    </location>
    <ligand>
        <name>substrate</name>
    </ligand>
</feature>
<feature type="binding site" evidence="1">
    <location>
        <begin position="101"/>
        <end position="104"/>
    </location>
    <ligand>
        <name>NAD(+)</name>
        <dbReference type="ChEBI" id="CHEBI:57540"/>
    </ligand>
</feature>
<feature type="binding site" evidence="1">
    <location>
        <begin position="191"/>
        <end position="193"/>
    </location>
    <ligand>
        <name>NAD(+)</name>
        <dbReference type="ChEBI" id="CHEBI:57540"/>
    </ligand>
</feature>
<feature type="binding site" evidence="1">
    <location>
        <begin position="217"/>
        <end position="219"/>
    </location>
    <ligand>
        <name>NAD(+)</name>
        <dbReference type="ChEBI" id="CHEBI:57540"/>
    </ligand>
</feature>
<feature type="binding site" evidence="1">
    <location>
        <position position="235"/>
    </location>
    <ligand>
        <name>NAD(+)</name>
        <dbReference type="ChEBI" id="CHEBI:57540"/>
    </ligand>
</feature>
<proteinExistence type="inferred from homology"/>
<organism>
    <name type="scientific">Deinococcus radiodurans (strain ATCC 13939 / DSM 20539 / JCM 16871 / CCUG 27074 / LMG 4051 / NBRC 15346 / NCIMB 9279 / VKM B-1422 / R1)</name>
    <dbReference type="NCBI Taxonomy" id="243230"/>
    <lineage>
        <taxon>Bacteria</taxon>
        <taxon>Thermotogati</taxon>
        <taxon>Deinococcota</taxon>
        <taxon>Deinococci</taxon>
        <taxon>Deinococcales</taxon>
        <taxon>Deinococcaceae</taxon>
        <taxon>Deinococcus</taxon>
    </lineage>
</organism>
<evidence type="ECO:0000255" key="1">
    <source>
        <dbReference type="HAMAP-Rule" id="MF_01121"/>
    </source>
</evidence>
<evidence type="ECO:0000255" key="2">
    <source>
        <dbReference type="PROSITE-ProRule" id="PRU00236"/>
    </source>
</evidence>
<gene>
    <name evidence="1" type="primary">cobB</name>
    <name type="ordered locus">DR_0016</name>
</gene>
<keyword id="KW-0963">Cytoplasm</keyword>
<keyword id="KW-0520">NAD</keyword>
<keyword id="KW-1185">Reference proteome</keyword>
<keyword id="KW-0808">Transferase</keyword>
<protein>
    <recommendedName>
        <fullName evidence="1">NAD-dependent protein deacylase</fullName>
        <ecNumber evidence="1">2.3.1.286</ecNumber>
    </recommendedName>
    <alternativeName>
        <fullName evidence="1">Regulatory protein SIR2 homolog</fullName>
    </alternativeName>
</protein>